<evidence type="ECO:0000250" key="1">
    <source>
        <dbReference type="UniProtKB" id="P30304"/>
    </source>
</evidence>
<evidence type="ECO:0000250" key="2">
    <source>
        <dbReference type="UniProtKB" id="P30307"/>
    </source>
</evidence>
<evidence type="ECO:0000255" key="3">
    <source>
        <dbReference type="PROSITE-ProRule" id="PRU00173"/>
    </source>
</evidence>
<evidence type="ECO:0000256" key="4">
    <source>
        <dbReference type="SAM" id="MobiDB-lite"/>
    </source>
</evidence>
<evidence type="ECO:0000269" key="5">
    <source>
    </source>
</evidence>
<evidence type="ECO:0000305" key="6"/>
<reference key="1">
    <citation type="journal article" date="1995" name="Dev. Biol.">
        <title>The distinct and developmentally regulated patterns of expression of members of the mouse Cdc25 gene family suggest differential functions during gametogenesis.</title>
        <authorList>
            <person name="Wu S."/>
            <person name="Wolgemuth D.J."/>
        </authorList>
    </citation>
    <scope>NUCLEOTIDE SEQUENCE [MRNA]</scope>
    <scope>TISSUE SPECIFICITY</scope>
</reference>
<reference key="2">
    <citation type="journal article" date="1994" name="Immunogenetics">
        <title>Cloning and characterization of a cdc25 phosphatase from mouse lymphocytes.</title>
        <authorList>
            <person name="Nargi J.L."/>
            <person name="Woodford-Thomas T.A."/>
        </authorList>
    </citation>
    <scope>NUCLEOTIDE SEQUENCE [MRNA]</scope>
</reference>
<reference key="3">
    <citation type="journal article" date="2004" name="Genome Res.">
        <title>The status, quality, and expansion of the NIH full-length cDNA project: the Mammalian Gene Collection (MGC).</title>
        <authorList>
            <consortium name="The MGC Project Team"/>
        </authorList>
    </citation>
    <scope>NUCLEOTIDE SEQUENCE [LARGE SCALE MRNA]</scope>
</reference>
<keyword id="KW-0007">Acetylation</keyword>
<keyword id="KW-0131">Cell cycle</keyword>
<keyword id="KW-0132">Cell division</keyword>
<keyword id="KW-0378">Hydrolase</keyword>
<keyword id="KW-0498">Mitosis</keyword>
<keyword id="KW-0539">Nucleus</keyword>
<keyword id="KW-0597">Phosphoprotein</keyword>
<keyword id="KW-0904">Protein phosphatase</keyword>
<keyword id="KW-1185">Reference proteome</keyword>
<sequence length="447" mass="50046">MSTGPIPPASEEGSFVSAPSFRSKQRKILHLLLERNTSFTIRSDFPESPKDKLHDSANLSILSGGTPKCCLDLSNLSSGEMSASPLTTSADLEDNGSLDSSGPLDRQLTGKDFHQDLMKGIPVQLLCSTPNAMNHGHRKKIAKRSTSAHKENINTSLKALEWEAPRTPRFRKMPGGPLTSPLCELEMKHLGSPITTVPKLSQNVKLEDQERISEDPMECSLGDQDAKGLSLRKMVPLCDMNAIQMEEEESGSELLIGDFSKVCVLPTVPGKHPDLKYISPDTVAALLSGKFQSVIERFYIIDCRYPYEYLGGHILGALNLHSQKELHEFFLRKPVVPLDIQKRVIIVFLCEFSSERGPRMCRSLREKDRALNQYPALYYPELYILKGGYRDFFPEYMELCDPQSYCPMLHQDHQAELLSWRSQSKAQEGERQLQGQIALLVKGASPQ</sequence>
<gene>
    <name type="primary">Cdc25c</name>
    <name type="synonym">Cdc25m1</name>
</gene>
<dbReference type="EC" id="3.1.3.48"/>
<dbReference type="EMBL" id="U15562">
    <property type="protein sequence ID" value="AAA74912.1"/>
    <property type="molecule type" value="mRNA"/>
</dbReference>
<dbReference type="EMBL" id="L16926">
    <property type="protein sequence ID" value="AAA37409.1"/>
    <property type="molecule type" value="mRNA"/>
</dbReference>
<dbReference type="EMBL" id="BC004669">
    <property type="protein sequence ID" value="AAH04669.1"/>
    <property type="molecule type" value="mRNA"/>
</dbReference>
<dbReference type="CCDS" id="CCDS37759.1"/>
<dbReference type="PIR" id="I49126">
    <property type="entry name" value="I49126"/>
</dbReference>
<dbReference type="RefSeq" id="NP_033990.2">
    <property type="nucleotide sequence ID" value="NM_009860.3"/>
</dbReference>
<dbReference type="RefSeq" id="XP_036016849.1">
    <property type="nucleotide sequence ID" value="XM_036160956.1"/>
</dbReference>
<dbReference type="SMR" id="P48967"/>
<dbReference type="BioGRID" id="198623">
    <property type="interactions" value="3"/>
</dbReference>
<dbReference type="FunCoup" id="P48967">
    <property type="interactions" value="1026"/>
</dbReference>
<dbReference type="IntAct" id="P48967">
    <property type="interactions" value="1"/>
</dbReference>
<dbReference type="STRING" id="10090.ENSMUSP00000055427"/>
<dbReference type="iPTMnet" id="P48967"/>
<dbReference type="PhosphoSitePlus" id="P48967"/>
<dbReference type="PaxDb" id="10090-ENSMUSP00000055427"/>
<dbReference type="PeptideAtlas" id="P48967"/>
<dbReference type="ProteomicsDB" id="291395"/>
<dbReference type="Antibodypedia" id="3534">
    <property type="antibodies" value="1095 antibodies from 44 providers"/>
</dbReference>
<dbReference type="DNASU" id="12532"/>
<dbReference type="Ensembl" id="ENSMUST00000060710.9">
    <property type="protein sequence ID" value="ENSMUSP00000055427.8"/>
    <property type="gene ID" value="ENSMUSG00000044201.11"/>
</dbReference>
<dbReference type="GeneID" id="12532"/>
<dbReference type="KEGG" id="mmu:12532"/>
<dbReference type="UCSC" id="uc008elf.2">
    <property type="organism name" value="mouse"/>
</dbReference>
<dbReference type="AGR" id="MGI:88350"/>
<dbReference type="CTD" id="995"/>
<dbReference type="MGI" id="MGI:88350">
    <property type="gene designation" value="Cdc25c"/>
</dbReference>
<dbReference type="VEuPathDB" id="HostDB:ENSMUSG00000044201"/>
<dbReference type="eggNOG" id="KOG3772">
    <property type="taxonomic scope" value="Eukaryota"/>
</dbReference>
<dbReference type="GeneTree" id="ENSGT00940000161460"/>
<dbReference type="HOGENOM" id="CLU_014464_4_0_1"/>
<dbReference type="InParanoid" id="P48967"/>
<dbReference type="OMA" id="HLDSKGP"/>
<dbReference type="OrthoDB" id="26523at2759"/>
<dbReference type="PhylomeDB" id="P48967"/>
<dbReference type="TreeFam" id="TF101056"/>
<dbReference type="Reactome" id="R-MMU-156711">
    <property type="pathway name" value="Polo-like kinase mediated events"/>
</dbReference>
<dbReference type="Reactome" id="R-MMU-176187">
    <property type="pathway name" value="Activation of ATR in response to replication stress"/>
</dbReference>
<dbReference type="Reactome" id="R-MMU-5625740">
    <property type="pathway name" value="RHO GTPases activate PKNs"/>
</dbReference>
<dbReference type="Reactome" id="R-MMU-6804115">
    <property type="pathway name" value="TP53 regulates transcription of additional cell cycle genes whose exact role in the p53 pathway remain uncertain"/>
</dbReference>
<dbReference type="Reactome" id="R-MMU-69273">
    <property type="pathway name" value="Cyclin A/B1/B2 associated events during G2/M transition"/>
</dbReference>
<dbReference type="Reactome" id="R-MMU-75035">
    <property type="pathway name" value="Chk1/Chk2(Cds1) mediated inactivation of Cyclin B:Cdk1 complex"/>
</dbReference>
<dbReference type="BioGRID-ORCS" id="12532">
    <property type="hits" value="2 hits in 80 CRISPR screens"/>
</dbReference>
<dbReference type="ChiTaRS" id="Cdc25c">
    <property type="organism name" value="mouse"/>
</dbReference>
<dbReference type="PRO" id="PR:P48967"/>
<dbReference type="Proteomes" id="UP000000589">
    <property type="component" value="Chromosome 18"/>
</dbReference>
<dbReference type="RNAct" id="P48967">
    <property type="molecule type" value="protein"/>
</dbReference>
<dbReference type="Bgee" id="ENSMUSG00000044201">
    <property type="expression patterns" value="Expressed in floor plate of midbrain and 152 other cell types or tissues"/>
</dbReference>
<dbReference type="ExpressionAtlas" id="P48967">
    <property type="expression patterns" value="baseline and differential"/>
</dbReference>
<dbReference type="GO" id="GO:0005737">
    <property type="term" value="C:cytoplasm"/>
    <property type="evidence" value="ECO:0000314"/>
    <property type="project" value="MGI"/>
</dbReference>
<dbReference type="GO" id="GO:0005829">
    <property type="term" value="C:cytosol"/>
    <property type="evidence" value="ECO:0007669"/>
    <property type="project" value="Ensembl"/>
</dbReference>
<dbReference type="GO" id="GO:0005758">
    <property type="term" value="C:mitochondrial intermembrane space"/>
    <property type="evidence" value="ECO:0000314"/>
    <property type="project" value="MGI"/>
</dbReference>
<dbReference type="GO" id="GO:0016607">
    <property type="term" value="C:nuclear speck"/>
    <property type="evidence" value="ECO:0007669"/>
    <property type="project" value="Ensembl"/>
</dbReference>
<dbReference type="GO" id="GO:0005634">
    <property type="term" value="C:nucleus"/>
    <property type="evidence" value="ECO:0000314"/>
    <property type="project" value="MGI"/>
</dbReference>
<dbReference type="GO" id="GO:0120283">
    <property type="term" value="F:protein serine/threonine kinase binding"/>
    <property type="evidence" value="ECO:0007669"/>
    <property type="project" value="Ensembl"/>
</dbReference>
<dbReference type="GO" id="GO:0004725">
    <property type="term" value="F:protein tyrosine phosphatase activity"/>
    <property type="evidence" value="ECO:0007669"/>
    <property type="project" value="UniProtKB-EC"/>
</dbReference>
<dbReference type="GO" id="GO:0050699">
    <property type="term" value="F:WW domain binding"/>
    <property type="evidence" value="ECO:0007669"/>
    <property type="project" value="Ensembl"/>
</dbReference>
<dbReference type="GO" id="GO:0051301">
    <property type="term" value="P:cell division"/>
    <property type="evidence" value="ECO:0007669"/>
    <property type="project" value="UniProtKB-KW"/>
</dbReference>
<dbReference type="GO" id="GO:0000086">
    <property type="term" value="P:G2/M transition of mitotic cell cycle"/>
    <property type="evidence" value="ECO:0007669"/>
    <property type="project" value="Ensembl"/>
</dbReference>
<dbReference type="GO" id="GO:1902751">
    <property type="term" value="P:positive regulation of cell cycle G2/M phase transition"/>
    <property type="evidence" value="ECO:0007669"/>
    <property type="project" value="InterPro"/>
</dbReference>
<dbReference type="CDD" id="cd01530">
    <property type="entry name" value="Cdc25"/>
    <property type="match status" value="1"/>
</dbReference>
<dbReference type="FunFam" id="3.40.250.10:FF:000004">
    <property type="entry name" value="M-phase inducer phosphatase 1 isoform X1"/>
    <property type="match status" value="1"/>
</dbReference>
<dbReference type="Gene3D" id="3.40.250.10">
    <property type="entry name" value="Rhodanese-like domain"/>
    <property type="match status" value="1"/>
</dbReference>
<dbReference type="InterPro" id="IPR000751">
    <property type="entry name" value="MPI_Phosphatase"/>
</dbReference>
<dbReference type="InterPro" id="IPR001763">
    <property type="entry name" value="Rhodanese-like_dom"/>
</dbReference>
<dbReference type="InterPro" id="IPR036873">
    <property type="entry name" value="Rhodanese-like_dom_sf"/>
</dbReference>
<dbReference type="PANTHER" id="PTHR10828:SF64">
    <property type="entry name" value="M-PHASE INDUCER PHOSPHATASE 3"/>
    <property type="match status" value="1"/>
</dbReference>
<dbReference type="PANTHER" id="PTHR10828">
    <property type="entry name" value="M-PHASE INDUCER PHOSPHATASE DUAL SPECIFICITY PHOSPHATASE CDC25"/>
    <property type="match status" value="1"/>
</dbReference>
<dbReference type="Pfam" id="PF00581">
    <property type="entry name" value="Rhodanese"/>
    <property type="match status" value="1"/>
</dbReference>
<dbReference type="PRINTS" id="PR00716">
    <property type="entry name" value="MPIPHPHTASE"/>
</dbReference>
<dbReference type="SMART" id="SM00450">
    <property type="entry name" value="RHOD"/>
    <property type="match status" value="1"/>
</dbReference>
<dbReference type="SUPFAM" id="SSF52821">
    <property type="entry name" value="Rhodanese/Cell cycle control phosphatase"/>
    <property type="match status" value="1"/>
</dbReference>
<dbReference type="PROSITE" id="PS50206">
    <property type="entry name" value="RHODANESE_3"/>
    <property type="match status" value="1"/>
</dbReference>
<comment type="function">
    <text evidence="2">Functions as a dosage-dependent inducer in mitotic control. Tyrosine protein phosphatase required for progression of the cell cycle. When phosphorylated, highly effective in activating G2 cells into prophase. Directly dephosphorylates CDK1 and activates its kinase activity.</text>
</comment>
<comment type="catalytic activity">
    <reaction evidence="2">
        <text>O-phospho-L-tyrosyl-[protein] + H2O = L-tyrosyl-[protein] + phosphate</text>
        <dbReference type="Rhea" id="RHEA:10684"/>
        <dbReference type="Rhea" id="RHEA-COMP:10136"/>
        <dbReference type="Rhea" id="RHEA-COMP:20101"/>
        <dbReference type="ChEBI" id="CHEBI:15377"/>
        <dbReference type="ChEBI" id="CHEBI:43474"/>
        <dbReference type="ChEBI" id="CHEBI:46858"/>
        <dbReference type="ChEBI" id="CHEBI:61978"/>
        <dbReference type="EC" id="3.1.3.48"/>
    </reaction>
    <physiologicalReaction direction="left-to-right" evidence="2">
        <dbReference type="Rhea" id="RHEA:10685"/>
    </physiologicalReaction>
</comment>
<comment type="subunit">
    <text evidence="2">Interacts with MAPK14 and 14-3-3 proteins. When phosphorylated on Ser-128 and/or Thr-129, interacts with PLK1. Interacts with MARK3/C-TAK1.</text>
</comment>
<comment type="subcellular location">
    <subcellularLocation>
        <location evidence="2">Nucleus</location>
    </subcellularLocation>
</comment>
<comment type="tissue specificity">
    <text evidence="5">Spleen and thymus.</text>
</comment>
<comment type="PTM">
    <text evidence="2">Phosphorylated by PLK4. Phosphorylated by PLK1, leading to activate the phosphatase activity (By similarity). Phosphorylated by CHEK1 and MAPKAPK2. This phosphorylation creates a binding site for 14-3-3 protein and inhibits the phosphatase activity. Phosphorylation by PLK3 at Ser-213 promotes nuclear translocation. Ser-220 is a minor phosphorylation site (By similarity). Phosphorylation by CDK1 occurs at G2 and G2-M transition and leads to increased activity (By similarity).</text>
</comment>
<comment type="similarity">
    <text evidence="6">Belongs to the MPI phosphatase family.</text>
</comment>
<name>MPIP3_MOUSE</name>
<organism>
    <name type="scientific">Mus musculus</name>
    <name type="common">Mouse</name>
    <dbReference type="NCBI Taxonomy" id="10090"/>
    <lineage>
        <taxon>Eukaryota</taxon>
        <taxon>Metazoa</taxon>
        <taxon>Chordata</taxon>
        <taxon>Craniata</taxon>
        <taxon>Vertebrata</taxon>
        <taxon>Euteleostomi</taxon>
        <taxon>Mammalia</taxon>
        <taxon>Eutheria</taxon>
        <taxon>Euarchontoglires</taxon>
        <taxon>Glires</taxon>
        <taxon>Rodentia</taxon>
        <taxon>Myomorpha</taxon>
        <taxon>Muroidea</taxon>
        <taxon>Muridae</taxon>
        <taxon>Murinae</taxon>
        <taxon>Mus</taxon>
        <taxon>Mus</taxon>
    </lineage>
</organism>
<feature type="initiator methionine" description="Removed" evidence="2">
    <location>
        <position position="1"/>
    </location>
</feature>
<feature type="chain" id="PRO_0000198648" description="M-phase inducer phosphatase 3">
    <location>
        <begin position="2"/>
        <end position="447"/>
    </location>
</feature>
<feature type="domain" description="Rhodanese" evidence="3">
    <location>
        <begin position="294"/>
        <end position="401"/>
    </location>
</feature>
<feature type="region of interest" description="Disordered" evidence="4">
    <location>
        <begin position="81"/>
        <end position="109"/>
    </location>
</feature>
<feature type="compositionally biased region" description="Polar residues" evidence="4">
    <location>
        <begin position="81"/>
        <end position="90"/>
    </location>
</feature>
<feature type="active site" evidence="1">
    <location>
        <position position="350"/>
    </location>
</feature>
<feature type="modified residue" description="N-acetylserine" evidence="2">
    <location>
        <position position="2"/>
    </location>
</feature>
<feature type="modified residue" description="Phosphoserine" evidence="2">
    <location>
        <position position="20"/>
    </location>
</feature>
<feature type="modified residue" description="Phosphoserine" evidence="2">
    <location>
        <position position="38"/>
    </location>
</feature>
<feature type="modified residue" description="Phosphoserine" evidence="2">
    <location>
        <position position="56"/>
    </location>
</feature>
<feature type="modified residue" description="Phosphoserine" evidence="2">
    <location>
        <position position="60"/>
    </location>
</feature>
<feature type="modified residue" description="Phosphoserine" evidence="2">
    <location>
        <position position="63"/>
    </location>
</feature>
<feature type="modified residue" description="Phosphothreonine; by CDK1" evidence="2">
    <location>
        <position position="66"/>
    </location>
</feature>
<feature type="modified residue" description="Phosphoserine" evidence="2">
    <location>
        <position position="128"/>
    </location>
</feature>
<feature type="modified residue" description="Phosphothreonine" evidence="2">
    <location>
        <position position="129"/>
    </location>
</feature>
<feature type="modified residue" description="Phosphoserine; by CDK1" evidence="2">
    <location>
        <position position="192"/>
    </location>
</feature>
<feature type="modified residue" description="Phosphoserine; by PLK3" evidence="2">
    <location>
        <position position="213"/>
    </location>
</feature>
<feature type="modified residue" description="Phosphoserine; by PLK3" evidence="2">
    <location>
        <position position="220"/>
    </location>
</feature>
<feature type="modified residue" description="Phosphoserine" evidence="2">
    <location>
        <position position="445"/>
    </location>
</feature>
<feature type="sequence conflict" description="In Ref. 2; AAA37409." evidence="6" ref="2">
    <original>INTSLKALEWEAP</original>
    <variation>AAFLLLSLQLNDAGPSCADKHQFKGIGMGGT</variation>
    <location>
        <begin position="153"/>
        <end position="165"/>
    </location>
</feature>
<feature type="sequence conflict" description="In Ref. 1; AAA74912." evidence="6" ref="1">
    <original>V</original>
    <variation>L</variation>
    <location>
        <position position="336"/>
    </location>
</feature>
<protein>
    <recommendedName>
        <fullName>M-phase inducer phosphatase 3</fullName>
        <ecNumber>3.1.3.48</ecNumber>
    </recommendedName>
    <alternativeName>
        <fullName>Dual specificity phosphatase Cdc25C</fullName>
    </alternativeName>
</protein>
<proteinExistence type="evidence at transcript level"/>
<accession>P48967</accession>
<accession>Q99KG6</accession>